<accession>P61447</accession>
<accession>O51867</accession>
<comment type="function">
    <text evidence="1">Negative regulator of class I heat shock genes (grpE-dnaK-dnaJ and groELS operons). Prevents heat-shock induction of these operons.</text>
</comment>
<comment type="similarity">
    <text evidence="1">Belongs to the HrcA family.</text>
</comment>
<evidence type="ECO:0000255" key="1">
    <source>
        <dbReference type="HAMAP-Rule" id="MF_00081"/>
    </source>
</evidence>
<proteinExistence type="inferred from homology"/>
<feature type="chain" id="PRO_0000182494" description="Heat-inducible transcription repressor HrcA">
    <location>
        <begin position="1"/>
        <end position="342"/>
    </location>
</feature>
<sequence>MDLTERHKRILKALVDEFIQENRPVGSKTLFDKHDIGLSPASIRTVLKDLEDFGYLASKHTSGGRIPTERGYRFYVDSLVILYELTLKEKQRIQQEYLKMQFKLDQILKATASVLSSLSNAAGIVIGPAKNLDTLKHIELIHVRGDEILMILVMRSGTVLHRNIFVDQNYSQEALYQVSKYLNDNLKGYDIYEIQNVIIPKLMIRKDGPEDFIRIADLISSAMTPDNSEVTLYIDGFKNLYANFRDEEQQLSQVLSLLDDQGFLKAFFSEYIDQDGVFTIIGKDGDRSMSGVSIITSNYKMGEKKIGALGIIGPQRMDYNRALPLVDFTSKLVSEMVTRISK</sequence>
<gene>
    <name evidence="1" type="primary">hrcA</name>
    <name type="ordered locus">LA_3703</name>
</gene>
<dbReference type="EMBL" id="AE010300">
    <property type="protein sequence ID" value="AAN50901.1"/>
    <property type="molecule type" value="Genomic_DNA"/>
</dbReference>
<dbReference type="RefSeq" id="NP_713883.1">
    <property type="nucleotide sequence ID" value="NC_004342.2"/>
</dbReference>
<dbReference type="RefSeq" id="WP_000366219.1">
    <property type="nucleotide sequence ID" value="NC_004342.2"/>
</dbReference>
<dbReference type="SMR" id="P61447"/>
<dbReference type="STRING" id="189518.LA_3703"/>
<dbReference type="PaxDb" id="189518-LA_3703"/>
<dbReference type="EnsemblBacteria" id="AAN50901">
    <property type="protein sequence ID" value="AAN50901"/>
    <property type="gene ID" value="LA_3703"/>
</dbReference>
<dbReference type="GeneID" id="61143881"/>
<dbReference type="KEGG" id="lil:LA_3703"/>
<dbReference type="PATRIC" id="fig|189518.3.peg.3678"/>
<dbReference type="HOGENOM" id="CLU_050019_1_0_12"/>
<dbReference type="InParanoid" id="P61447"/>
<dbReference type="OrthoDB" id="9783139at2"/>
<dbReference type="Proteomes" id="UP000001408">
    <property type="component" value="Chromosome I"/>
</dbReference>
<dbReference type="GO" id="GO:0003677">
    <property type="term" value="F:DNA binding"/>
    <property type="evidence" value="ECO:0007669"/>
    <property type="project" value="InterPro"/>
</dbReference>
<dbReference type="GO" id="GO:0045892">
    <property type="term" value="P:negative regulation of DNA-templated transcription"/>
    <property type="evidence" value="ECO:0000318"/>
    <property type="project" value="GO_Central"/>
</dbReference>
<dbReference type="FunFam" id="1.10.10.10:FF:000450">
    <property type="entry name" value="Heat-inducible transcription repressor HrcA"/>
    <property type="match status" value="1"/>
</dbReference>
<dbReference type="Gene3D" id="3.30.450.40">
    <property type="match status" value="1"/>
</dbReference>
<dbReference type="Gene3D" id="3.30.390.60">
    <property type="entry name" value="Heat-inducible transcription repressor hrca homolog, domain 3"/>
    <property type="match status" value="1"/>
</dbReference>
<dbReference type="Gene3D" id="1.10.10.10">
    <property type="entry name" value="Winged helix-like DNA-binding domain superfamily/Winged helix DNA-binding domain"/>
    <property type="match status" value="1"/>
</dbReference>
<dbReference type="HAMAP" id="MF_00081">
    <property type="entry name" value="HrcA"/>
    <property type="match status" value="1"/>
</dbReference>
<dbReference type="InterPro" id="IPR029016">
    <property type="entry name" value="GAF-like_dom_sf"/>
</dbReference>
<dbReference type="InterPro" id="IPR002571">
    <property type="entry name" value="HrcA"/>
</dbReference>
<dbReference type="InterPro" id="IPR021153">
    <property type="entry name" value="HrcA_C"/>
</dbReference>
<dbReference type="InterPro" id="IPR036388">
    <property type="entry name" value="WH-like_DNA-bd_sf"/>
</dbReference>
<dbReference type="InterPro" id="IPR036390">
    <property type="entry name" value="WH_DNA-bd_sf"/>
</dbReference>
<dbReference type="InterPro" id="IPR023120">
    <property type="entry name" value="WHTH_transcript_rep_HrcA_IDD"/>
</dbReference>
<dbReference type="NCBIfam" id="TIGR00331">
    <property type="entry name" value="hrcA"/>
    <property type="match status" value="1"/>
</dbReference>
<dbReference type="PANTHER" id="PTHR34824">
    <property type="entry name" value="HEAT-INDUCIBLE TRANSCRIPTION REPRESSOR HRCA"/>
    <property type="match status" value="1"/>
</dbReference>
<dbReference type="PANTHER" id="PTHR34824:SF1">
    <property type="entry name" value="HEAT-INDUCIBLE TRANSCRIPTION REPRESSOR HRCA"/>
    <property type="match status" value="1"/>
</dbReference>
<dbReference type="Pfam" id="PF01628">
    <property type="entry name" value="HrcA"/>
    <property type="match status" value="1"/>
</dbReference>
<dbReference type="PIRSF" id="PIRSF005485">
    <property type="entry name" value="HrcA"/>
    <property type="match status" value="1"/>
</dbReference>
<dbReference type="SUPFAM" id="SSF55781">
    <property type="entry name" value="GAF domain-like"/>
    <property type="match status" value="1"/>
</dbReference>
<dbReference type="SUPFAM" id="SSF46785">
    <property type="entry name" value="Winged helix' DNA-binding domain"/>
    <property type="match status" value="1"/>
</dbReference>
<organism>
    <name type="scientific">Leptospira interrogans serogroup Icterohaemorrhagiae serovar Lai (strain 56601)</name>
    <dbReference type="NCBI Taxonomy" id="189518"/>
    <lineage>
        <taxon>Bacteria</taxon>
        <taxon>Pseudomonadati</taxon>
        <taxon>Spirochaetota</taxon>
        <taxon>Spirochaetia</taxon>
        <taxon>Leptospirales</taxon>
        <taxon>Leptospiraceae</taxon>
        <taxon>Leptospira</taxon>
    </lineage>
</organism>
<protein>
    <recommendedName>
        <fullName evidence="1">Heat-inducible transcription repressor HrcA</fullName>
    </recommendedName>
</protein>
<name>HRCA_LEPIN</name>
<keyword id="KW-1185">Reference proteome</keyword>
<keyword id="KW-0678">Repressor</keyword>
<keyword id="KW-0346">Stress response</keyword>
<keyword id="KW-0804">Transcription</keyword>
<keyword id="KW-0805">Transcription regulation</keyword>
<reference key="1">
    <citation type="journal article" date="2003" name="Nature">
        <title>Unique physiological and pathogenic features of Leptospira interrogans revealed by whole-genome sequencing.</title>
        <authorList>
            <person name="Ren S.-X."/>
            <person name="Fu G."/>
            <person name="Jiang X.-G."/>
            <person name="Zeng R."/>
            <person name="Miao Y.-G."/>
            <person name="Xu H."/>
            <person name="Zhang Y.-X."/>
            <person name="Xiong H."/>
            <person name="Lu G."/>
            <person name="Lu L.-F."/>
            <person name="Jiang H.-Q."/>
            <person name="Jia J."/>
            <person name="Tu Y.-F."/>
            <person name="Jiang J.-X."/>
            <person name="Gu W.-Y."/>
            <person name="Zhang Y.-Q."/>
            <person name="Cai Z."/>
            <person name="Sheng H.-H."/>
            <person name="Yin H.-F."/>
            <person name="Zhang Y."/>
            <person name="Zhu G.-F."/>
            <person name="Wan M."/>
            <person name="Huang H.-L."/>
            <person name="Qian Z."/>
            <person name="Wang S.-Y."/>
            <person name="Ma W."/>
            <person name="Yao Z.-J."/>
            <person name="Shen Y."/>
            <person name="Qiang B.-Q."/>
            <person name="Xia Q.-C."/>
            <person name="Guo X.-K."/>
            <person name="Danchin A."/>
            <person name="Saint Girons I."/>
            <person name="Somerville R.L."/>
            <person name="Wen Y.-M."/>
            <person name="Shi M.-H."/>
            <person name="Chen Z."/>
            <person name="Xu J.-G."/>
            <person name="Zhao G.-P."/>
        </authorList>
    </citation>
    <scope>NUCLEOTIDE SEQUENCE [LARGE SCALE GENOMIC DNA]</scope>
    <source>
        <strain>56601</strain>
    </source>
</reference>